<proteinExistence type="evidence at transcript level"/>
<reference key="1">
    <citation type="journal article" date="2005" name="Science">
        <title>The transcriptional landscape of the mammalian genome.</title>
        <authorList>
            <person name="Carninci P."/>
            <person name="Kasukawa T."/>
            <person name="Katayama S."/>
            <person name="Gough J."/>
            <person name="Frith M.C."/>
            <person name="Maeda N."/>
            <person name="Oyama R."/>
            <person name="Ravasi T."/>
            <person name="Lenhard B."/>
            <person name="Wells C."/>
            <person name="Kodzius R."/>
            <person name="Shimokawa K."/>
            <person name="Bajic V.B."/>
            <person name="Brenner S.E."/>
            <person name="Batalov S."/>
            <person name="Forrest A.R."/>
            <person name="Zavolan M."/>
            <person name="Davis M.J."/>
            <person name="Wilming L.G."/>
            <person name="Aidinis V."/>
            <person name="Allen J.E."/>
            <person name="Ambesi-Impiombato A."/>
            <person name="Apweiler R."/>
            <person name="Aturaliya R.N."/>
            <person name="Bailey T.L."/>
            <person name="Bansal M."/>
            <person name="Baxter L."/>
            <person name="Beisel K.W."/>
            <person name="Bersano T."/>
            <person name="Bono H."/>
            <person name="Chalk A.M."/>
            <person name="Chiu K.P."/>
            <person name="Choudhary V."/>
            <person name="Christoffels A."/>
            <person name="Clutterbuck D.R."/>
            <person name="Crowe M.L."/>
            <person name="Dalla E."/>
            <person name="Dalrymple B.P."/>
            <person name="de Bono B."/>
            <person name="Della Gatta G."/>
            <person name="di Bernardo D."/>
            <person name="Down T."/>
            <person name="Engstrom P."/>
            <person name="Fagiolini M."/>
            <person name="Faulkner G."/>
            <person name="Fletcher C.F."/>
            <person name="Fukushima T."/>
            <person name="Furuno M."/>
            <person name="Futaki S."/>
            <person name="Gariboldi M."/>
            <person name="Georgii-Hemming P."/>
            <person name="Gingeras T.R."/>
            <person name="Gojobori T."/>
            <person name="Green R.E."/>
            <person name="Gustincich S."/>
            <person name="Harbers M."/>
            <person name="Hayashi Y."/>
            <person name="Hensch T.K."/>
            <person name="Hirokawa N."/>
            <person name="Hill D."/>
            <person name="Huminiecki L."/>
            <person name="Iacono M."/>
            <person name="Ikeo K."/>
            <person name="Iwama A."/>
            <person name="Ishikawa T."/>
            <person name="Jakt M."/>
            <person name="Kanapin A."/>
            <person name="Katoh M."/>
            <person name="Kawasawa Y."/>
            <person name="Kelso J."/>
            <person name="Kitamura H."/>
            <person name="Kitano H."/>
            <person name="Kollias G."/>
            <person name="Krishnan S.P."/>
            <person name="Kruger A."/>
            <person name="Kummerfeld S.K."/>
            <person name="Kurochkin I.V."/>
            <person name="Lareau L.F."/>
            <person name="Lazarevic D."/>
            <person name="Lipovich L."/>
            <person name="Liu J."/>
            <person name="Liuni S."/>
            <person name="McWilliam S."/>
            <person name="Madan Babu M."/>
            <person name="Madera M."/>
            <person name="Marchionni L."/>
            <person name="Matsuda H."/>
            <person name="Matsuzawa S."/>
            <person name="Miki H."/>
            <person name="Mignone F."/>
            <person name="Miyake S."/>
            <person name="Morris K."/>
            <person name="Mottagui-Tabar S."/>
            <person name="Mulder N."/>
            <person name="Nakano N."/>
            <person name="Nakauchi H."/>
            <person name="Ng P."/>
            <person name="Nilsson R."/>
            <person name="Nishiguchi S."/>
            <person name="Nishikawa S."/>
            <person name="Nori F."/>
            <person name="Ohara O."/>
            <person name="Okazaki Y."/>
            <person name="Orlando V."/>
            <person name="Pang K.C."/>
            <person name="Pavan W.J."/>
            <person name="Pavesi G."/>
            <person name="Pesole G."/>
            <person name="Petrovsky N."/>
            <person name="Piazza S."/>
            <person name="Reed J."/>
            <person name="Reid J.F."/>
            <person name="Ring B.Z."/>
            <person name="Ringwald M."/>
            <person name="Rost B."/>
            <person name="Ruan Y."/>
            <person name="Salzberg S.L."/>
            <person name="Sandelin A."/>
            <person name="Schneider C."/>
            <person name="Schoenbach C."/>
            <person name="Sekiguchi K."/>
            <person name="Semple C.A."/>
            <person name="Seno S."/>
            <person name="Sessa L."/>
            <person name="Sheng Y."/>
            <person name="Shibata Y."/>
            <person name="Shimada H."/>
            <person name="Shimada K."/>
            <person name="Silva D."/>
            <person name="Sinclair B."/>
            <person name="Sperling S."/>
            <person name="Stupka E."/>
            <person name="Sugiura K."/>
            <person name="Sultana R."/>
            <person name="Takenaka Y."/>
            <person name="Taki K."/>
            <person name="Tammoja K."/>
            <person name="Tan S.L."/>
            <person name="Tang S."/>
            <person name="Taylor M.S."/>
            <person name="Tegner J."/>
            <person name="Teichmann S.A."/>
            <person name="Ueda H.R."/>
            <person name="van Nimwegen E."/>
            <person name="Verardo R."/>
            <person name="Wei C.L."/>
            <person name="Yagi K."/>
            <person name="Yamanishi H."/>
            <person name="Zabarovsky E."/>
            <person name="Zhu S."/>
            <person name="Zimmer A."/>
            <person name="Hide W."/>
            <person name="Bult C."/>
            <person name="Grimmond S.M."/>
            <person name="Teasdale R.D."/>
            <person name="Liu E.T."/>
            <person name="Brusic V."/>
            <person name="Quackenbush J."/>
            <person name="Wahlestedt C."/>
            <person name="Mattick J.S."/>
            <person name="Hume D.A."/>
            <person name="Kai C."/>
            <person name="Sasaki D."/>
            <person name="Tomaru Y."/>
            <person name="Fukuda S."/>
            <person name="Kanamori-Katayama M."/>
            <person name="Suzuki M."/>
            <person name="Aoki J."/>
            <person name="Arakawa T."/>
            <person name="Iida J."/>
            <person name="Imamura K."/>
            <person name="Itoh M."/>
            <person name="Kato T."/>
            <person name="Kawaji H."/>
            <person name="Kawagashira N."/>
            <person name="Kawashima T."/>
            <person name="Kojima M."/>
            <person name="Kondo S."/>
            <person name="Konno H."/>
            <person name="Nakano K."/>
            <person name="Ninomiya N."/>
            <person name="Nishio T."/>
            <person name="Okada M."/>
            <person name="Plessy C."/>
            <person name="Shibata K."/>
            <person name="Shiraki T."/>
            <person name="Suzuki S."/>
            <person name="Tagami M."/>
            <person name="Waki K."/>
            <person name="Watahiki A."/>
            <person name="Okamura-Oho Y."/>
            <person name="Suzuki H."/>
            <person name="Kawai J."/>
            <person name="Hayashizaki Y."/>
        </authorList>
    </citation>
    <scope>NUCLEOTIDE SEQUENCE [LARGE SCALE MRNA]</scope>
    <source>
        <strain>C57BL/6J</strain>
        <tissue>Medulla oblongata</tissue>
    </source>
</reference>
<reference key="2">
    <citation type="submission" date="2005-07" db="EMBL/GenBank/DDBJ databases">
        <authorList>
            <person name="Mural R.J."/>
            <person name="Adams M.D."/>
            <person name="Myers E.W."/>
            <person name="Smith H.O."/>
            <person name="Venter J.C."/>
        </authorList>
    </citation>
    <scope>NUCLEOTIDE SEQUENCE [LARGE SCALE GENOMIC DNA]</scope>
</reference>
<reference key="3">
    <citation type="journal article" date="2009" name="PLoS Biol.">
        <title>Lineage-specific biology revealed by a finished genome assembly of the mouse.</title>
        <authorList>
            <person name="Church D.M."/>
            <person name="Goodstadt L."/>
            <person name="Hillier L.W."/>
            <person name="Zody M.C."/>
            <person name="Goldstein S."/>
            <person name="She X."/>
            <person name="Bult C.J."/>
            <person name="Agarwala R."/>
            <person name="Cherry J.L."/>
            <person name="DiCuccio M."/>
            <person name="Hlavina W."/>
            <person name="Kapustin Y."/>
            <person name="Meric P."/>
            <person name="Maglott D."/>
            <person name="Birtle Z."/>
            <person name="Marques A.C."/>
            <person name="Graves T."/>
            <person name="Zhou S."/>
            <person name="Teague B."/>
            <person name="Potamousis K."/>
            <person name="Churas C."/>
            <person name="Place M."/>
            <person name="Herschleb J."/>
            <person name="Runnheim R."/>
            <person name="Forrest D."/>
            <person name="Amos-Landgraf J."/>
            <person name="Schwartz D.C."/>
            <person name="Cheng Z."/>
            <person name="Lindblad-Toh K."/>
            <person name="Eichler E.E."/>
            <person name="Ponting C.P."/>
        </authorList>
    </citation>
    <scope>NUCLEOTIDE SEQUENCE [LARGE SCALE GENOMIC DNA]</scope>
    <source>
        <strain>C57BL/6J</strain>
    </source>
</reference>
<reference key="4">
    <citation type="journal article" date="2004" name="Genome Res.">
        <title>The status, quality, and expansion of the NIH full-length cDNA project: the Mammalian Gene Collection (MGC).</title>
        <authorList>
            <consortium name="The MGC Project Team"/>
        </authorList>
    </citation>
    <scope>NUCLEOTIDE SEQUENCE [LARGE SCALE MRNA]</scope>
    <source>
        <tissue>Brain</tissue>
    </source>
</reference>
<comment type="similarity">
    <text evidence="3">Belongs to the CCDC160 family.</text>
</comment>
<organism>
    <name type="scientific">Mus musculus</name>
    <name type="common">Mouse</name>
    <dbReference type="NCBI Taxonomy" id="10090"/>
    <lineage>
        <taxon>Eukaryota</taxon>
        <taxon>Metazoa</taxon>
        <taxon>Chordata</taxon>
        <taxon>Craniata</taxon>
        <taxon>Vertebrata</taxon>
        <taxon>Euteleostomi</taxon>
        <taxon>Mammalia</taxon>
        <taxon>Eutheria</taxon>
        <taxon>Euarchontoglires</taxon>
        <taxon>Glires</taxon>
        <taxon>Rodentia</taxon>
        <taxon>Myomorpha</taxon>
        <taxon>Muroidea</taxon>
        <taxon>Muridae</taxon>
        <taxon>Murinae</taxon>
        <taxon>Mus</taxon>
        <taxon>Mus</taxon>
    </lineage>
</organism>
<name>CC160_MOUSE</name>
<feature type="chain" id="PRO_0000345952" description="Coiled-coil domain-containing protein 160">
    <location>
        <begin position="1"/>
        <end position="323"/>
    </location>
</feature>
<feature type="region of interest" description="Disordered" evidence="2">
    <location>
        <begin position="1"/>
        <end position="81"/>
    </location>
</feature>
<feature type="coiled-coil region" evidence="1">
    <location>
        <begin position="144"/>
        <end position="289"/>
    </location>
</feature>
<feature type="compositionally biased region" description="Polar residues" evidence="2">
    <location>
        <begin position="48"/>
        <end position="58"/>
    </location>
</feature>
<accession>Q3UYG1</accession>
<dbReference type="EMBL" id="AK134708">
    <property type="protein sequence ID" value="BAE22251.1"/>
    <property type="molecule type" value="mRNA"/>
</dbReference>
<dbReference type="EMBL" id="CH466570">
    <property type="protein sequence ID" value="EDL29116.1"/>
    <property type="molecule type" value="Genomic_DNA"/>
</dbReference>
<dbReference type="EMBL" id="BX936351">
    <property type="status" value="NOT_ANNOTATED_CDS"/>
    <property type="molecule type" value="Genomic_DNA"/>
</dbReference>
<dbReference type="EMBL" id="BC138946">
    <property type="protein sequence ID" value="AAI38947.1"/>
    <property type="molecule type" value="mRNA"/>
</dbReference>
<dbReference type="EMBL" id="BC138947">
    <property type="protein sequence ID" value="AAI38948.1"/>
    <property type="molecule type" value="mRNA"/>
</dbReference>
<dbReference type="CCDS" id="CCDS30126.1"/>
<dbReference type="RefSeq" id="NP_001029231.1">
    <property type="nucleotide sequence ID" value="NM_001034059.2"/>
</dbReference>
<dbReference type="RefSeq" id="XP_006541574.1">
    <property type="nucleotide sequence ID" value="XM_006541511.1"/>
</dbReference>
<dbReference type="SMR" id="Q3UYG1"/>
<dbReference type="FunCoup" id="Q3UYG1">
    <property type="interactions" value="2"/>
</dbReference>
<dbReference type="STRING" id="10090.ENSMUSP00000099121"/>
<dbReference type="iPTMnet" id="Q3UYG1"/>
<dbReference type="PhosphoSitePlus" id="Q3UYG1"/>
<dbReference type="PaxDb" id="10090-ENSMUSP00000099121"/>
<dbReference type="PeptideAtlas" id="Q3UYG1"/>
<dbReference type="ProteomicsDB" id="265698"/>
<dbReference type="Antibodypedia" id="50575">
    <property type="antibodies" value="7 antibodies from 4 providers"/>
</dbReference>
<dbReference type="Ensembl" id="ENSMUST00000101588.2">
    <property type="protein sequence ID" value="ENSMUSP00000099121.2"/>
    <property type="gene ID" value="ENSMUSG00000073207.2"/>
</dbReference>
<dbReference type="GeneID" id="434778"/>
<dbReference type="KEGG" id="mmu:434778"/>
<dbReference type="UCSC" id="uc009tem.1">
    <property type="organism name" value="mouse"/>
</dbReference>
<dbReference type="AGR" id="MGI:3588225"/>
<dbReference type="CTD" id="347475"/>
<dbReference type="MGI" id="MGI:3588225">
    <property type="gene designation" value="Ccdc160"/>
</dbReference>
<dbReference type="VEuPathDB" id="HostDB:ENSMUSG00000073207"/>
<dbReference type="eggNOG" id="ENOG502RVAM">
    <property type="taxonomic scope" value="Eukaryota"/>
</dbReference>
<dbReference type="GeneTree" id="ENSGT00390000013938"/>
<dbReference type="HOGENOM" id="CLU_058746_0_0_1"/>
<dbReference type="InParanoid" id="Q3UYG1"/>
<dbReference type="OMA" id="STWTTKE"/>
<dbReference type="OrthoDB" id="5985715at2759"/>
<dbReference type="PhylomeDB" id="Q3UYG1"/>
<dbReference type="TreeFam" id="TF351883"/>
<dbReference type="BioGRID-ORCS" id="434778">
    <property type="hits" value="3 hits in 78 CRISPR screens"/>
</dbReference>
<dbReference type="ChiTaRS" id="Ccdc160">
    <property type="organism name" value="mouse"/>
</dbReference>
<dbReference type="PRO" id="PR:Q3UYG1"/>
<dbReference type="Proteomes" id="UP000000589">
    <property type="component" value="Chromosome X"/>
</dbReference>
<dbReference type="RNAct" id="Q3UYG1">
    <property type="molecule type" value="protein"/>
</dbReference>
<dbReference type="Bgee" id="ENSMUSG00000073207">
    <property type="expression patterns" value="Expressed in facial nucleus and 158 other cell types or tissues"/>
</dbReference>
<dbReference type="PANTHER" id="PTHR48251">
    <property type="entry name" value="COILED-COIL DOMAIN-CONTAINING PROTEIN 160"/>
    <property type="match status" value="1"/>
</dbReference>
<dbReference type="PANTHER" id="PTHR48251:SF1">
    <property type="entry name" value="COILED-COIL DOMAIN-CONTAINING PROTEIN 160"/>
    <property type="match status" value="1"/>
</dbReference>
<keyword id="KW-0175">Coiled coil</keyword>
<keyword id="KW-1185">Reference proteome</keyword>
<sequence>MDARRKHWKDNTFTPFLNEHDFQEAAAPPQPLSEQSSADNHKRMGRVSNFSVRNTQEGNKFKRKDYSSQIAEGEQDSNLRERRMNVSKNDANTNSAFWDSLHLDDATKESSHRRESASAWNKKKLPAATQVTRKKWTEAMPPKLRLHLLNEELGELSLKCREIERDFENAEKELLNFRKEASVKAVNFQEPGTGASKKDRELQALKNDLSEKATNVKNLTEELQQAKEVMYRLSLENRNLKDAVRKLKHQTELNTALLREEMKLFYELEMEKIRLELGAIKNELRVEKTLRVKNSRALEVLGRHVASVVRSSNPADHFTGNIF</sequence>
<protein>
    <recommendedName>
        <fullName>Coiled-coil domain-containing protein 160</fullName>
    </recommendedName>
</protein>
<evidence type="ECO:0000255" key="1"/>
<evidence type="ECO:0000256" key="2">
    <source>
        <dbReference type="SAM" id="MobiDB-lite"/>
    </source>
</evidence>
<evidence type="ECO:0000305" key="3"/>
<gene>
    <name type="primary">Ccdc160</name>
</gene>